<name>NUOB_GEOMG</name>
<reference key="1">
    <citation type="journal article" date="2009" name="BMC Microbiol.">
        <title>The genome sequence of Geobacter metallireducens: features of metabolism, physiology and regulation common and dissimilar to Geobacter sulfurreducens.</title>
        <authorList>
            <person name="Aklujkar M."/>
            <person name="Krushkal J."/>
            <person name="DiBartolo G."/>
            <person name="Lapidus A."/>
            <person name="Land M.L."/>
            <person name="Lovley D.R."/>
        </authorList>
    </citation>
    <scope>NUCLEOTIDE SEQUENCE [LARGE SCALE GENOMIC DNA]</scope>
    <source>
        <strain>ATCC 53774 / DSM 7210 / GS-15</strain>
    </source>
</reference>
<evidence type="ECO:0000255" key="1">
    <source>
        <dbReference type="HAMAP-Rule" id="MF_01356"/>
    </source>
</evidence>
<feature type="chain" id="PRO_0000376240" description="NADH-quinone oxidoreductase subunit B">
    <location>
        <begin position="1"/>
        <end position="170"/>
    </location>
</feature>
<feature type="binding site" evidence="1">
    <location>
        <position position="37"/>
    </location>
    <ligand>
        <name>[4Fe-4S] cluster</name>
        <dbReference type="ChEBI" id="CHEBI:49883"/>
    </ligand>
</feature>
<feature type="binding site" evidence="1">
    <location>
        <position position="38"/>
    </location>
    <ligand>
        <name>[4Fe-4S] cluster</name>
        <dbReference type="ChEBI" id="CHEBI:49883"/>
    </ligand>
</feature>
<feature type="binding site" evidence="1">
    <location>
        <position position="102"/>
    </location>
    <ligand>
        <name>[4Fe-4S] cluster</name>
        <dbReference type="ChEBI" id="CHEBI:49883"/>
    </ligand>
</feature>
<feature type="binding site" evidence="1">
    <location>
        <position position="131"/>
    </location>
    <ligand>
        <name>[4Fe-4S] cluster</name>
        <dbReference type="ChEBI" id="CHEBI:49883"/>
    </ligand>
</feature>
<accession>Q39QA8</accession>
<dbReference type="EC" id="7.1.1.-" evidence="1"/>
<dbReference type="EMBL" id="CP000148">
    <property type="protein sequence ID" value="ABB33566.1"/>
    <property type="molecule type" value="Genomic_DNA"/>
</dbReference>
<dbReference type="RefSeq" id="WP_004512580.1">
    <property type="nucleotide sequence ID" value="NC_007517.1"/>
</dbReference>
<dbReference type="SMR" id="Q39QA8"/>
<dbReference type="STRING" id="269799.Gmet_3354"/>
<dbReference type="KEGG" id="gme:Gmet_3354"/>
<dbReference type="eggNOG" id="COG0377">
    <property type="taxonomic scope" value="Bacteria"/>
</dbReference>
<dbReference type="HOGENOM" id="CLU_055737_7_3_7"/>
<dbReference type="Proteomes" id="UP000007073">
    <property type="component" value="Chromosome"/>
</dbReference>
<dbReference type="GO" id="GO:0005886">
    <property type="term" value="C:plasma membrane"/>
    <property type="evidence" value="ECO:0007669"/>
    <property type="project" value="UniProtKB-SubCell"/>
</dbReference>
<dbReference type="GO" id="GO:0045271">
    <property type="term" value="C:respiratory chain complex I"/>
    <property type="evidence" value="ECO:0007669"/>
    <property type="project" value="TreeGrafter"/>
</dbReference>
<dbReference type="GO" id="GO:0051539">
    <property type="term" value="F:4 iron, 4 sulfur cluster binding"/>
    <property type="evidence" value="ECO:0007669"/>
    <property type="project" value="UniProtKB-KW"/>
</dbReference>
<dbReference type="GO" id="GO:0005506">
    <property type="term" value="F:iron ion binding"/>
    <property type="evidence" value="ECO:0007669"/>
    <property type="project" value="UniProtKB-UniRule"/>
</dbReference>
<dbReference type="GO" id="GO:0008137">
    <property type="term" value="F:NADH dehydrogenase (ubiquinone) activity"/>
    <property type="evidence" value="ECO:0007669"/>
    <property type="project" value="InterPro"/>
</dbReference>
<dbReference type="GO" id="GO:0050136">
    <property type="term" value="F:NADH:ubiquinone reductase (non-electrogenic) activity"/>
    <property type="evidence" value="ECO:0007669"/>
    <property type="project" value="UniProtKB-UniRule"/>
</dbReference>
<dbReference type="GO" id="GO:0048038">
    <property type="term" value="F:quinone binding"/>
    <property type="evidence" value="ECO:0007669"/>
    <property type="project" value="UniProtKB-KW"/>
</dbReference>
<dbReference type="GO" id="GO:0009060">
    <property type="term" value="P:aerobic respiration"/>
    <property type="evidence" value="ECO:0007669"/>
    <property type="project" value="TreeGrafter"/>
</dbReference>
<dbReference type="GO" id="GO:0015990">
    <property type="term" value="P:electron transport coupled proton transport"/>
    <property type="evidence" value="ECO:0007669"/>
    <property type="project" value="TreeGrafter"/>
</dbReference>
<dbReference type="FunFam" id="3.40.50.12280:FF:000002">
    <property type="entry name" value="NADH-quinone oxidoreductase subunit B"/>
    <property type="match status" value="1"/>
</dbReference>
<dbReference type="Gene3D" id="3.40.50.12280">
    <property type="match status" value="1"/>
</dbReference>
<dbReference type="HAMAP" id="MF_01356">
    <property type="entry name" value="NDH1_NuoB"/>
    <property type="match status" value="1"/>
</dbReference>
<dbReference type="InterPro" id="IPR006137">
    <property type="entry name" value="NADH_UbQ_OxRdtase-like_20kDa"/>
</dbReference>
<dbReference type="InterPro" id="IPR006138">
    <property type="entry name" value="NADH_UQ_OxRdtase_20Kd_su"/>
</dbReference>
<dbReference type="NCBIfam" id="TIGR01957">
    <property type="entry name" value="nuoB_fam"/>
    <property type="match status" value="1"/>
</dbReference>
<dbReference type="NCBIfam" id="NF005012">
    <property type="entry name" value="PRK06411.1"/>
    <property type="match status" value="1"/>
</dbReference>
<dbReference type="PANTHER" id="PTHR11995">
    <property type="entry name" value="NADH DEHYDROGENASE"/>
    <property type="match status" value="1"/>
</dbReference>
<dbReference type="PANTHER" id="PTHR11995:SF14">
    <property type="entry name" value="NADH DEHYDROGENASE [UBIQUINONE] IRON-SULFUR PROTEIN 7, MITOCHONDRIAL"/>
    <property type="match status" value="1"/>
</dbReference>
<dbReference type="Pfam" id="PF01058">
    <property type="entry name" value="Oxidored_q6"/>
    <property type="match status" value="1"/>
</dbReference>
<dbReference type="SUPFAM" id="SSF56770">
    <property type="entry name" value="HydA/Nqo6-like"/>
    <property type="match status" value="1"/>
</dbReference>
<keyword id="KW-0004">4Fe-4S</keyword>
<keyword id="KW-0997">Cell inner membrane</keyword>
<keyword id="KW-1003">Cell membrane</keyword>
<keyword id="KW-0408">Iron</keyword>
<keyword id="KW-0411">Iron-sulfur</keyword>
<keyword id="KW-0472">Membrane</keyword>
<keyword id="KW-0479">Metal-binding</keyword>
<keyword id="KW-0520">NAD</keyword>
<keyword id="KW-0874">Quinone</keyword>
<keyword id="KW-1185">Reference proteome</keyword>
<keyword id="KW-1278">Translocase</keyword>
<keyword id="KW-0813">Transport</keyword>
<keyword id="KW-0830">Ubiquinone</keyword>
<organism>
    <name type="scientific">Geobacter metallireducens (strain ATCC 53774 / DSM 7210 / GS-15)</name>
    <dbReference type="NCBI Taxonomy" id="269799"/>
    <lineage>
        <taxon>Bacteria</taxon>
        <taxon>Pseudomonadati</taxon>
        <taxon>Thermodesulfobacteriota</taxon>
        <taxon>Desulfuromonadia</taxon>
        <taxon>Geobacterales</taxon>
        <taxon>Geobacteraceae</taxon>
        <taxon>Geobacter</taxon>
    </lineage>
</organism>
<gene>
    <name evidence="1" type="primary">nuoB</name>
    <name type="ordered locus">Gmet_3354</name>
</gene>
<proteinExistence type="inferred from homology"/>
<protein>
    <recommendedName>
        <fullName evidence="1">NADH-quinone oxidoreductase subunit B</fullName>
        <ecNumber evidence="1">7.1.1.-</ecNumber>
    </recommendedName>
    <alternativeName>
        <fullName evidence="1">NADH dehydrogenase I subunit B</fullName>
    </alternativeName>
    <alternativeName>
        <fullName evidence="1">NDH-1 subunit B</fullName>
    </alternativeName>
</protein>
<sequence>MGVDQPLGDSFITASLDGLVNWARKSSIWPMTFGLACCAIEMMATGASHNDLDRFGIIFRASPRQADCIIIAGTVTKKMLPVIQTVYEQMPEPKWVVAMGACACSGGVFDTYSVVQGIDEALPVDVYIPGCPPRPEALLYGLIKLQDKIMKDKNSFGSTIGLGQRLESAA</sequence>
<comment type="function">
    <text evidence="1">NDH-1 shuttles electrons from NADH, via FMN and iron-sulfur (Fe-S) centers, to quinones in the respiratory chain. The immediate electron acceptor for the enzyme in this species is believed to be ubiquinone. Couples the redox reaction to proton translocation (for every two electrons transferred, four hydrogen ions are translocated across the cytoplasmic membrane), and thus conserves the redox energy in a proton gradient.</text>
</comment>
<comment type="catalytic activity">
    <reaction evidence="1">
        <text>a quinone + NADH + 5 H(+)(in) = a quinol + NAD(+) + 4 H(+)(out)</text>
        <dbReference type="Rhea" id="RHEA:57888"/>
        <dbReference type="ChEBI" id="CHEBI:15378"/>
        <dbReference type="ChEBI" id="CHEBI:24646"/>
        <dbReference type="ChEBI" id="CHEBI:57540"/>
        <dbReference type="ChEBI" id="CHEBI:57945"/>
        <dbReference type="ChEBI" id="CHEBI:132124"/>
    </reaction>
</comment>
<comment type="cofactor">
    <cofactor evidence="1">
        <name>[4Fe-4S] cluster</name>
        <dbReference type="ChEBI" id="CHEBI:49883"/>
    </cofactor>
    <text evidence="1">Binds 1 [4Fe-4S] cluster.</text>
</comment>
<comment type="subunit">
    <text evidence="1">NDH-1 is composed of 14 different subunits. Subunits NuoB, C, D, E, F, and G constitute the peripheral sector of the complex.</text>
</comment>
<comment type="subcellular location">
    <subcellularLocation>
        <location evidence="1">Cell inner membrane</location>
        <topology evidence="1">Peripheral membrane protein</topology>
        <orientation evidence="1">Cytoplasmic side</orientation>
    </subcellularLocation>
</comment>
<comment type="similarity">
    <text evidence="1">Belongs to the complex I 20 kDa subunit family.</text>
</comment>